<keyword id="KW-0217">Developmental protein</keyword>
<keyword id="KW-0238">DNA-binding</keyword>
<keyword id="KW-0539">Nucleus</keyword>
<keyword id="KW-1185">Reference proteome</keyword>
<keyword id="KW-0804">Transcription</keyword>
<keyword id="KW-0805">Transcription regulation</keyword>
<reference key="1">
    <citation type="journal article" date="1995" name="Science">
        <title>A subclass of bHLH proteins required for cardiac morphogenesis.</title>
        <authorList>
            <person name="Srivastava D."/>
            <person name="Cserjesi P."/>
            <person name="Olson E.N."/>
        </authorList>
    </citation>
    <scope>NUCLEOTIDE SEQUENCE [MRNA]</scope>
    <scope>FUNCTION</scope>
    <source>
        <tissue>Embryo</tissue>
    </source>
</reference>
<comment type="function">
    <text evidence="1 4">Transcription factor (By similarity). Plays an essential role in cardiac morphogenesis (PubMed:8533092).</text>
</comment>
<comment type="subunit">
    <text>Efficient DNA binding requires dimerization with another bHLH protein.</text>
</comment>
<comment type="subcellular location">
    <subcellularLocation>
        <location evidence="1">Nucleus</location>
        <location evidence="1">Nucleoplasm</location>
    </subcellularLocation>
    <subcellularLocation>
        <location evidence="1">Nucleus</location>
        <location evidence="1">Nucleolus</location>
    </subcellularLocation>
</comment>
<comment type="developmental stage">
    <text>At stage 8, detected in the cardiac crescent. At stage 10, expressed throughout the cardiac tube and the sinus venosus. By stage 15, expressed homogeneously in the various regions of the heart, including the atria, future left ventricle, bulbus cordis and truncus arteriosus, and in the forming branchial arches. Expression persists through stage 20, but decreases thereafter.</text>
</comment>
<feature type="chain" id="PRO_0000127189" description="Heart- and neural crest derivatives-expressed protein 1">
    <location>
        <begin position="1"/>
        <end position="202"/>
    </location>
</feature>
<feature type="domain" description="bHLH" evidence="2">
    <location>
        <begin position="83"/>
        <end position="135"/>
    </location>
</feature>
<feature type="region of interest" description="Disordered" evidence="3">
    <location>
        <begin position="143"/>
        <end position="187"/>
    </location>
</feature>
<feature type="compositionally biased region" description="Basic and acidic residues" evidence="3">
    <location>
        <begin position="149"/>
        <end position="162"/>
    </location>
</feature>
<protein>
    <recommendedName>
        <fullName>Heart- and neural crest derivatives-expressed protein 1</fullName>
    </recommendedName>
    <alternativeName>
        <fullName>Extraembryonic tissues, heart, autonomic nervous system and neural crest derivatives-expressed protein 1</fullName>
        <shortName>eHAND</shortName>
    </alternativeName>
</protein>
<organism>
    <name type="scientific">Gallus gallus</name>
    <name type="common">Chicken</name>
    <dbReference type="NCBI Taxonomy" id="9031"/>
    <lineage>
        <taxon>Eukaryota</taxon>
        <taxon>Metazoa</taxon>
        <taxon>Chordata</taxon>
        <taxon>Craniata</taxon>
        <taxon>Vertebrata</taxon>
        <taxon>Euteleostomi</taxon>
        <taxon>Archelosauria</taxon>
        <taxon>Archosauria</taxon>
        <taxon>Dinosauria</taxon>
        <taxon>Saurischia</taxon>
        <taxon>Theropoda</taxon>
        <taxon>Coelurosauria</taxon>
        <taxon>Aves</taxon>
        <taxon>Neognathae</taxon>
        <taxon>Galloanserae</taxon>
        <taxon>Galliformes</taxon>
        <taxon>Phasianidae</taxon>
        <taxon>Phasianinae</taxon>
        <taxon>Gallus</taxon>
    </lineage>
</organism>
<accession>Q90691</accession>
<sequence length="202" mass="22679">MNLVGGYQHHHHHHHHHHMLHEPFLFGPAARCHQERAYFPGWVLNPAEVTPELHGQSPAYGPAEFGSGGAGRLEALSGRLGRRKGVGGPKKERRRTESINSAFAELRECIPNVPADTKLSKIKTLRLATSYIAYLMEVLARDSQPGEPEGFKAELKKADGRENKRKRETQPEVYSQPLAHGEKKLKGRTGWPQQVWALELNP</sequence>
<proteinExistence type="evidence at transcript level"/>
<dbReference type="EMBL" id="U40041">
    <property type="protein sequence ID" value="AAC59734.1"/>
    <property type="molecule type" value="mRNA"/>
</dbReference>
<dbReference type="RefSeq" id="NP_990296.1">
    <property type="nucleotide sequence ID" value="NM_204965.2"/>
</dbReference>
<dbReference type="SMR" id="Q90691"/>
<dbReference type="FunCoup" id="Q90691">
    <property type="interactions" value="65"/>
</dbReference>
<dbReference type="STRING" id="9031.ENSGALP00000044206"/>
<dbReference type="PaxDb" id="9031-ENSGALP00000041858"/>
<dbReference type="Ensembl" id="ENSGALT00010038132.1">
    <property type="protein sequence ID" value="ENSGALP00010022003.1"/>
    <property type="gene ID" value="ENSGALG00010015835.1"/>
</dbReference>
<dbReference type="GeneID" id="395812"/>
<dbReference type="KEGG" id="gga:395812"/>
<dbReference type="CTD" id="9421"/>
<dbReference type="VEuPathDB" id="HostDB:geneid_395812"/>
<dbReference type="eggNOG" id="KOG4029">
    <property type="taxonomic scope" value="Eukaryota"/>
</dbReference>
<dbReference type="GeneTree" id="ENSGT00940000161111"/>
<dbReference type="InParanoid" id="Q90691"/>
<dbReference type="OMA" id="SRCHQDR"/>
<dbReference type="OrthoDB" id="10055449at2759"/>
<dbReference type="PhylomeDB" id="Q90691"/>
<dbReference type="PRO" id="PR:Q90691"/>
<dbReference type="Proteomes" id="UP000000539">
    <property type="component" value="Chromosome 13"/>
</dbReference>
<dbReference type="Bgee" id="ENSGALG00000035104">
    <property type="expression patterns" value="Expressed in heart and 1 other cell type or tissue"/>
</dbReference>
<dbReference type="GO" id="GO:0005737">
    <property type="term" value="C:cytoplasm"/>
    <property type="evidence" value="ECO:0007669"/>
    <property type="project" value="Ensembl"/>
</dbReference>
<dbReference type="GO" id="GO:0005730">
    <property type="term" value="C:nucleolus"/>
    <property type="evidence" value="ECO:0007669"/>
    <property type="project" value="UniProtKB-SubCell"/>
</dbReference>
<dbReference type="GO" id="GO:0005654">
    <property type="term" value="C:nucleoplasm"/>
    <property type="evidence" value="ECO:0007669"/>
    <property type="project" value="UniProtKB-SubCell"/>
</dbReference>
<dbReference type="GO" id="GO:0090575">
    <property type="term" value="C:RNA polymerase II transcription regulator complex"/>
    <property type="evidence" value="ECO:0007669"/>
    <property type="project" value="Ensembl"/>
</dbReference>
<dbReference type="GO" id="GO:0043425">
    <property type="term" value="F:bHLH transcription factor binding"/>
    <property type="evidence" value="ECO:0007669"/>
    <property type="project" value="Ensembl"/>
</dbReference>
<dbReference type="GO" id="GO:0001228">
    <property type="term" value="F:DNA-binding transcription activator activity, RNA polymerase II-specific"/>
    <property type="evidence" value="ECO:0007669"/>
    <property type="project" value="Ensembl"/>
</dbReference>
<dbReference type="GO" id="GO:0000981">
    <property type="term" value="F:DNA-binding transcription factor activity, RNA polymerase II-specific"/>
    <property type="evidence" value="ECO:0000318"/>
    <property type="project" value="GO_Central"/>
</dbReference>
<dbReference type="GO" id="GO:0001227">
    <property type="term" value="F:DNA-binding transcription repressor activity, RNA polymerase II-specific"/>
    <property type="evidence" value="ECO:0007669"/>
    <property type="project" value="Ensembl"/>
</dbReference>
<dbReference type="GO" id="GO:0019899">
    <property type="term" value="F:enzyme binding"/>
    <property type="evidence" value="ECO:0007669"/>
    <property type="project" value="Ensembl"/>
</dbReference>
<dbReference type="GO" id="GO:0042803">
    <property type="term" value="F:protein homodimerization activity"/>
    <property type="evidence" value="ECO:0007669"/>
    <property type="project" value="Ensembl"/>
</dbReference>
<dbReference type="GO" id="GO:0000978">
    <property type="term" value="F:RNA polymerase II cis-regulatory region sequence-specific DNA binding"/>
    <property type="evidence" value="ECO:0007669"/>
    <property type="project" value="Ensembl"/>
</dbReference>
<dbReference type="GO" id="GO:0000977">
    <property type="term" value="F:RNA polymerase II transcription regulatory region sequence-specific DNA binding"/>
    <property type="evidence" value="ECO:0000318"/>
    <property type="project" value="GO_Central"/>
</dbReference>
<dbReference type="GO" id="GO:0061629">
    <property type="term" value="F:RNA polymerase II-specific DNA-binding transcription factor binding"/>
    <property type="evidence" value="ECO:0007669"/>
    <property type="project" value="Ensembl"/>
</dbReference>
<dbReference type="GO" id="GO:0001221">
    <property type="term" value="F:transcription coregulator binding"/>
    <property type="evidence" value="ECO:0007669"/>
    <property type="project" value="Ensembl"/>
</dbReference>
<dbReference type="GO" id="GO:0001525">
    <property type="term" value="P:angiogenesis"/>
    <property type="evidence" value="ECO:0007669"/>
    <property type="project" value="Ensembl"/>
</dbReference>
<dbReference type="GO" id="GO:0003218">
    <property type="term" value="P:cardiac left ventricle formation"/>
    <property type="evidence" value="ECO:0007669"/>
    <property type="project" value="Ensembl"/>
</dbReference>
<dbReference type="GO" id="GO:0003219">
    <property type="term" value="P:cardiac right ventricle formation"/>
    <property type="evidence" value="ECO:0007669"/>
    <property type="project" value="Ensembl"/>
</dbReference>
<dbReference type="GO" id="GO:0060411">
    <property type="term" value="P:cardiac septum morphogenesis"/>
    <property type="evidence" value="ECO:0007669"/>
    <property type="project" value="Ensembl"/>
</dbReference>
<dbReference type="GO" id="GO:0060536">
    <property type="term" value="P:cartilage morphogenesis"/>
    <property type="evidence" value="ECO:0007669"/>
    <property type="project" value="Ensembl"/>
</dbReference>
<dbReference type="GO" id="GO:0030154">
    <property type="term" value="P:cell differentiation"/>
    <property type="evidence" value="ECO:0007669"/>
    <property type="project" value="Ensembl"/>
</dbReference>
<dbReference type="GO" id="GO:0003144">
    <property type="term" value="P:embryonic heart tube formation"/>
    <property type="evidence" value="ECO:0007669"/>
    <property type="project" value="Ensembl"/>
</dbReference>
<dbReference type="GO" id="GO:0007507">
    <property type="term" value="P:heart development"/>
    <property type="evidence" value="ECO:0000318"/>
    <property type="project" value="GO_Central"/>
</dbReference>
<dbReference type="GO" id="GO:0001947">
    <property type="term" value="P:heart looping"/>
    <property type="evidence" value="ECO:0007669"/>
    <property type="project" value="Ensembl"/>
</dbReference>
<dbReference type="GO" id="GO:0060485">
    <property type="term" value="P:mesenchyme development"/>
    <property type="evidence" value="ECO:0007669"/>
    <property type="project" value="Ensembl"/>
</dbReference>
<dbReference type="GO" id="GO:0001707">
    <property type="term" value="P:mesoderm formation"/>
    <property type="evidence" value="ECO:0007669"/>
    <property type="project" value="Ensembl"/>
</dbReference>
<dbReference type="GO" id="GO:0006357">
    <property type="term" value="P:regulation of transcription by RNA polymerase II"/>
    <property type="evidence" value="ECO:0000318"/>
    <property type="project" value="GO_Central"/>
</dbReference>
<dbReference type="GO" id="GO:0055010">
    <property type="term" value="P:ventricular cardiac muscle tissue morphogenesis"/>
    <property type="evidence" value="ECO:0007669"/>
    <property type="project" value="Ensembl"/>
</dbReference>
<dbReference type="CDD" id="cd18952">
    <property type="entry name" value="bHLH_TS_HAND1"/>
    <property type="match status" value="1"/>
</dbReference>
<dbReference type="FunFam" id="4.10.280.10:FF:000010">
    <property type="entry name" value="Scleraxis bHLH transcription factor"/>
    <property type="match status" value="1"/>
</dbReference>
<dbReference type="Gene3D" id="4.10.280.10">
    <property type="entry name" value="Helix-loop-helix DNA-binding domain"/>
    <property type="match status" value="1"/>
</dbReference>
<dbReference type="InterPro" id="IPR011598">
    <property type="entry name" value="bHLH_dom"/>
</dbReference>
<dbReference type="InterPro" id="IPR050283">
    <property type="entry name" value="E-box_TF_Regulators"/>
</dbReference>
<dbReference type="InterPro" id="IPR036638">
    <property type="entry name" value="HLH_DNA-bd_sf"/>
</dbReference>
<dbReference type="PANTHER" id="PTHR23349">
    <property type="entry name" value="BASIC HELIX-LOOP-HELIX TRANSCRIPTION FACTOR, TWIST"/>
    <property type="match status" value="1"/>
</dbReference>
<dbReference type="PANTHER" id="PTHR23349:SF3">
    <property type="entry name" value="HEART- AND NEURAL CREST DERIVATIVES-EXPRESSED PROTEIN 1"/>
    <property type="match status" value="1"/>
</dbReference>
<dbReference type="Pfam" id="PF00010">
    <property type="entry name" value="HLH"/>
    <property type="match status" value="1"/>
</dbReference>
<dbReference type="SMART" id="SM00353">
    <property type="entry name" value="HLH"/>
    <property type="match status" value="1"/>
</dbReference>
<dbReference type="SUPFAM" id="SSF47459">
    <property type="entry name" value="HLH, helix-loop-helix DNA-binding domain"/>
    <property type="match status" value="1"/>
</dbReference>
<dbReference type="PROSITE" id="PS50888">
    <property type="entry name" value="BHLH"/>
    <property type="match status" value="1"/>
</dbReference>
<evidence type="ECO:0000250" key="1">
    <source>
        <dbReference type="UniProtKB" id="Q64279"/>
    </source>
</evidence>
<evidence type="ECO:0000255" key="2">
    <source>
        <dbReference type="PROSITE-ProRule" id="PRU00981"/>
    </source>
</evidence>
<evidence type="ECO:0000256" key="3">
    <source>
        <dbReference type="SAM" id="MobiDB-lite"/>
    </source>
</evidence>
<evidence type="ECO:0000269" key="4">
    <source>
    </source>
</evidence>
<gene>
    <name type="primary">HAND1</name>
    <name type="synonym">EHAND</name>
</gene>
<name>HAND1_CHICK</name>